<protein>
    <recommendedName>
        <fullName evidence="1">Citrate lyase acyl carrier protein</fullName>
    </recommendedName>
    <alternativeName>
        <fullName evidence="1">Citrate lyase gamma chain</fullName>
    </alternativeName>
</protein>
<sequence>MEIKQIAVAGSLESSDMMITISPNDGQGIVLELDSSVEKQFGNHIRALIKTTLARLGVESATIEAVDKGALDCTIQARTIAAVHRAAGVEHYNWKEIDSWNA</sequence>
<reference key="1">
    <citation type="journal article" date="2009" name="PLoS Pathog.">
        <title>Genomic evidence for the evolution of Streptococcus equi: host restriction, increased virulence, and genetic exchange with human pathogens.</title>
        <authorList>
            <person name="Holden M.T.G."/>
            <person name="Heather Z."/>
            <person name="Paillot R."/>
            <person name="Steward K.F."/>
            <person name="Webb K."/>
            <person name="Ainslie F."/>
            <person name="Jourdan T."/>
            <person name="Bason N.C."/>
            <person name="Holroyd N.E."/>
            <person name="Mungall K."/>
            <person name="Quail M.A."/>
            <person name="Sanders M."/>
            <person name="Simmonds M."/>
            <person name="Willey D."/>
            <person name="Brooks K."/>
            <person name="Aanensen D.M."/>
            <person name="Spratt B.G."/>
            <person name="Jolley K.A."/>
            <person name="Maiden M.C.J."/>
            <person name="Kehoe M."/>
            <person name="Chanter N."/>
            <person name="Bentley S.D."/>
            <person name="Robinson C."/>
            <person name="Maskell D.J."/>
            <person name="Parkhill J."/>
            <person name="Waller A.S."/>
        </authorList>
    </citation>
    <scope>NUCLEOTIDE SEQUENCE [LARGE SCALE GENOMIC DNA]</scope>
    <source>
        <strain>4047</strain>
    </source>
</reference>
<dbReference type="EMBL" id="FM204883">
    <property type="protein sequence ID" value="CAW93914.1"/>
    <property type="molecule type" value="Genomic_DNA"/>
</dbReference>
<dbReference type="RefSeq" id="WP_012679581.1">
    <property type="nucleotide sequence ID" value="NC_012471.1"/>
</dbReference>
<dbReference type="SMR" id="C0M6B4"/>
<dbReference type="KEGG" id="seu:SEQ_1201"/>
<dbReference type="HOGENOM" id="CLU_158489_0_0_9"/>
<dbReference type="OrthoDB" id="1120942at2"/>
<dbReference type="Proteomes" id="UP000001365">
    <property type="component" value="Chromosome"/>
</dbReference>
<dbReference type="GO" id="GO:0005737">
    <property type="term" value="C:cytoplasm"/>
    <property type="evidence" value="ECO:0007669"/>
    <property type="project" value="UniProtKB-SubCell"/>
</dbReference>
<dbReference type="HAMAP" id="MF_00805">
    <property type="entry name" value="CitD"/>
    <property type="match status" value="1"/>
</dbReference>
<dbReference type="InterPro" id="IPR006495">
    <property type="entry name" value="CitD"/>
</dbReference>
<dbReference type="InterPro" id="IPR023439">
    <property type="entry name" value="Mal_deCO2ase/Cit_lyase_ACP"/>
</dbReference>
<dbReference type="NCBIfam" id="TIGR01608">
    <property type="entry name" value="citD"/>
    <property type="match status" value="1"/>
</dbReference>
<dbReference type="NCBIfam" id="NF009726">
    <property type="entry name" value="PRK13253.1"/>
    <property type="match status" value="1"/>
</dbReference>
<dbReference type="Pfam" id="PF06857">
    <property type="entry name" value="ACP"/>
    <property type="match status" value="1"/>
</dbReference>
<dbReference type="PIRSF" id="PIRSF002736">
    <property type="entry name" value="Citrt_lyas_gamma"/>
    <property type="match status" value="1"/>
</dbReference>
<evidence type="ECO:0000255" key="1">
    <source>
        <dbReference type="HAMAP-Rule" id="MF_00805"/>
    </source>
</evidence>
<accession>C0M6B4</accession>
<keyword id="KW-0963">Cytoplasm</keyword>
<keyword id="KW-0597">Phosphoprotein</keyword>
<comment type="function">
    <text evidence="1">Covalent carrier of the coenzyme of citrate lyase.</text>
</comment>
<comment type="subunit">
    <text evidence="1">Oligomer with a subunit composition of (alpha,beta,gamma)6.</text>
</comment>
<comment type="subcellular location">
    <subcellularLocation>
        <location evidence="1">Cytoplasm</location>
    </subcellularLocation>
</comment>
<comment type="similarity">
    <text evidence="1">Belongs to the CitD family.</text>
</comment>
<name>CITD_STRE4</name>
<gene>
    <name evidence="1" type="primary">citD</name>
    <name type="ordered locus">SEQ_1201</name>
</gene>
<proteinExistence type="inferred from homology"/>
<feature type="chain" id="PRO_1000148564" description="Citrate lyase acyl carrier protein">
    <location>
        <begin position="1"/>
        <end position="102"/>
    </location>
</feature>
<feature type="modified residue" description="O-(phosphoribosyl dephospho-coenzyme A)serine" evidence="1">
    <location>
        <position position="14"/>
    </location>
</feature>
<organism>
    <name type="scientific">Streptococcus equi subsp. equi (strain 4047)</name>
    <dbReference type="NCBI Taxonomy" id="553482"/>
    <lineage>
        <taxon>Bacteria</taxon>
        <taxon>Bacillati</taxon>
        <taxon>Bacillota</taxon>
        <taxon>Bacilli</taxon>
        <taxon>Lactobacillales</taxon>
        <taxon>Streptococcaceae</taxon>
        <taxon>Streptococcus</taxon>
    </lineage>
</organism>